<gene>
    <name evidence="7" type="primary">TTC39B</name>
    <name type="synonym">C9orf52</name>
</gene>
<protein>
    <recommendedName>
        <fullName>Tetratricopeptide repeat protein 39B</fullName>
        <shortName>TPR repeat protein 39B</shortName>
    </recommendedName>
</protein>
<evidence type="ECO:0000250" key="1">
    <source>
        <dbReference type="UniProtKB" id="Q8BYY4"/>
    </source>
</evidence>
<evidence type="ECO:0000269" key="2">
    <source>
    </source>
</evidence>
<evidence type="ECO:0000269" key="3">
    <source>
    </source>
</evidence>
<evidence type="ECO:0000303" key="4">
    <source>
    </source>
</evidence>
<evidence type="ECO:0000303" key="5">
    <source>
    </source>
</evidence>
<evidence type="ECO:0000305" key="6"/>
<evidence type="ECO:0000312" key="7">
    <source>
        <dbReference type="HGNC" id="HGNC:23704"/>
    </source>
</evidence>
<proteinExistence type="evidence at protein level"/>
<accession>Q5VTQ0</accession>
<accession>A5PLN1</accession>
<accession>B4DQ10</accession>
<accession>B4DQX4</accession>
<accession>B4DW93</accession>
<accession>Q8IVR7</accession>
<accession>Q8IXZ6</accession>
<accession>Q8N267</accession>
<keyword id="KW-0025">Alternative splicing</keyword>
<keyword id="KW-0443">Lipid metabolism</keyword>
<keyword id="KW-1267">Proteomics identification</keyword>
<keyword id="KW-1185">Reference proteome</keyword>
<keyword id="KW-0677">Repeat</keyword>
<keyword id="KW-0802">TPR repeat</keyword>
<keyword id="KW-0833">Ubl conjugation pathway</keyword>
<name>TT39B_HUMAN</name>
<reference key="1">
    <citation type="journal article" date="2004" name="Nat. Genet.">
        <title>Complete sequencing and characterization of 21,243 full-length human cDNAs.</title>
        <authorList>
            <person name="Ota T."/>
            <person name="Suzuki Y."/>
            <person name="Nishikawa T."/>
            <person name="Otsuki T."/>
            <person name="Sugiyama T."/>
            <person name="Irie R."/>
            <person name="Wakamatsu A."/>
            <person name="Hayashi K."/>
            <person name="Sato H."/>
            <person name="Nagai K."/>
            <person name="Kimura K."/>
            <person name="Makita H."/>
            <person name="Sekine M."/>
            <person name="Obayashi M."/>
            <person name="Nishi T."/>
            <person name="Shibahara T."/>
            <person name="Tanaka T."/>
            <person name="Ishii S."/>
            <person name="Yamamoto J."/>
            <person name="Saito K."/>
            <person name="Kawai Y."/>
            <person name="Isono Y."/>
            <person name="Nakamura Y."/>
            <person name="Nagahari K."/>
            <person name="Murakami K."/>
            <person name="Yasuda T."/>
            <person name="Iwayanagi T."/>
            <person name="Wagatsuma M."/>
            <person name="Shiratori A."/>
            <person name="Sudo H."/>
            <person name="Hosoiri T."/>
            <person name="Kaku Y."/>
            <person name="Kodaira H."/>
            <person name="Kondo H."/>
            <person name="Sugawara M."/>
            <person name="Takahashi M."/>
            <person name="Kanda K."/>
            <person name="Yokoi T."/>
            <person name="Furuya T."/>
            <person name="Kikkawa E."/>
            <person name="Omura Y."/>
            <person name="Abe K."/>
            <person name="Kamihara K."/>
            <person name="Katsuta N."/>
            <person name="Sato K."/>
            <person name="Tanikawa M."/>
            <person name="Yamazaki M."/>
            <person name="Ninomiya K."/>
            <person name="Ishibashi T."/>
            <person name="Yamashita H."/>
            <person name="Murakawa K."/>
            <person name="Fujimori K."/>
            <person name="Tanai H."/>
            <person name="Kimata M."/>
            <person name="Watanabe M."/>
            <person name="Hiraoka S."/>
            <person name="Chiba Y."/>
            <person name="Ishida S."/>
            <person name="Ono Y."/>
            <person name="Takiguchi S."/>
            <person name="Watanabe S."/>
            <person name="Yosida M."/>
            <person name="Hotuta T."/>
            <person name="Kusano J."/>
            <person name="Kanehori K."/>
            <person name="Takahashi-Fujii A."/>
            <person name="Hara H."/>
            <person name="Tanase T.-O."/>
            <person name="Nomura Y."/>
            <person name="Togiya S."/>
            <person name="Komai F."/>
            <person name="Hara R."/>
            <person name="Takeuchi K."/>
            <person name="Arita M."/>
            <person name="Imose N."/>
            <person name="Musashino K."/>
            <person name="Yuuki H."/>
            <person name="Oshima A."/>
            <person name="Sasaki N."/>
            <person name="Aotsuka S."/>
            <person name="Yoshikawa Y."/>
            <person name="Matsunawa H."/>
            <person name="Ichihara T."/>
            <person name="Shiohata N."/>
            <person name="Sano S."/>
            <person name="Moriya S."/>
            <person name="Momiyama H."/>
            <person name="Satoh N."/>
            <person name="Takami S."/>
            <person name="Terashima Y."/>
            <person name="Suzuki O."/>
            <person name="Nakagawa S."/>
            <person name="Senoh A."/>
            <person name="Mizoguchi H."/>
            <person name="Goto Y."/>
            <person name="Shimizu F."/>
            <person name="Wakebe H."/>
            <person name="Hishigaki H."/>
            <person name="Watanabe T."/>
            <person name="Sugiyama A."/>
            <person name="Takemoto M."/>
            <person name="Kawakami B."/>
            <person name="Yamazaki M."/>
            <person name="Watanabe K."/>
            <person name="Kumagai A."/>
            <person name="Itakura S."/>
            <person name="Fukuzumi Y."/>
            <person name="Fujimori Y."/>
            <person name="Komiyama M."/>
            <person name="Tashiro H."/>
            <person name="Tanigami A."/>
            <person name="Fujiwara T."/>
            <person name="Ono T."/>
            <person name="Yamada K."/>
            <person name="Fujii Y."/>
            <person name="Ozaki K."/>
            <person name="Hirao M."/>
            <person name="Ohmori Y."/>
            <person name="Kawabata A."/>
            <person name="Hikiji T."/>
            <person name="Kobatake N."/>
            <person name="Inagaki H."/>
            <person name="Ikema Y."/>
            <person name="Okamoto S."/>
            <person name="Okitani R."/>
            <person name="Kawakami T."/>
            <person name="Noguchi S."/>
            <person name="Itoh T."/>
            <person name="Shigeta K."/>
            <person name="Senba T."/>
            <person name="Matsumura K."/>
            <person name="Nakajima Y."/>
            <person name="Mizuno T."/>
            <person name="Morinaga M."/>
            <person name="Sasaki M."/>
            <person name="Togashi T."/>
            <person name="Oyama M."/>
            <person name="Hata H."/>
            <person name="Watanabe M."/>
            <person name="Komatsu T."/>
            <person name="Mizushima-Sugano J."/>
            <person name="Satoh T."/>
            <person name="Shirai Y."/>
            <person name="Takahashi Y."/>
            <person name="Nakagawa K."/>
            <person name="Okumura K."/>
            <person name="Nagase T."/>
            <person name="Nomura N."/>
            <person name="Kikuchi H."/>
            <person name="Masuho Y."/>
            <person name="Yamashita R."/>
            <person name="Nakai K."/>
            <person name="Yada T."/>
            <person name="Nakamura Y."/>
            <person name="Ohara O."/>
            <person name="Isogai T."/>
            <person name="Sugano S."/>
        </authorList>
    </citation>
    <scope>NUCLEOTIDE SEQUENCE [LARGE SCALE MRNA] (ISOFORMS 3 AND 5)</scope>
    <scope>NUCLEOTIDE SEQUENCE [LARGE SCALE MRNA] OF 27-682 (ISOFORM 1)</scope>
    <scope>NUCLEOTIDE SEQUENCE [LARGE SCALE MRNA] OF 37-682 (ISOFORM 6)</scope>
    <scope>VARIANT VAL-420</scope>
    <source>
        <tissue>Blood</tissue>
        <tissue>Synovium</tissue>
        <tissue>Teratocarcinoma</tissue>
        <tissue>Tongue</tissue>
    </source>
</reference>
<reference key="2">
    <citation type="journal article" date="2004" name="Nature">
        <title>DNA sequence and analysis of human chromosome 9.</title>
        <authorList>
            <person name="Humphray S.J."/>
            <person name="Oliver K."/>
            <person name="Hunt A.R."/>
            <person name="Plumb R.W."/>
            <person name="Loveland J.E."/>
            <person name="Howe K.L."/>
            <person name="Andrews T.D."/>
            <person name="Searle S."/>
            <person name="Hunt S.E."/>
            <person name="Scott C.E."/>
            <person name="Jones M.C."/>
            <person name="Ainscough R."/>
            <person name="Almeida J.P."/>
            <person name="Ambrose K.D."/>
            <person name="Ashwell R.I.S."/>
            <person name="Babbage A.K."/>
            <person name="Babbage S."/>
            <person name="Bagguley C.L."/>
            <person name="Bailey J."/>
            <person name="Banerjee R."/>
            <person name="Barker D.J."/>
            <person name="Barlow K.F."/>
            <person name="Bates K."/>
            <person name="Beasley H."/>
            <person name="Beasley O."/>
            <person name="Bird C.P."/>
            <person name="Bray-Allen S."/>
            <person name="Brown A.J."/>
            <person name="Brown J.Y."/>
            <person name="Burford D."/>
            <person name="Burrill W."/>
            <person name="Burton J."/>
            <person name="Carder C."/>
            <person name="Carter N.P."/>
            <person name="Chapman J.C."/>
            <person name="Chen Y."/>
            <person name="Clarke G."/>
            <person name="Clark S.Y."/>
            <person name="Clee C.M."/>
            <person name="Clegg S."/>
            <person name="Collier R.E."/>
            <person name="Corby N."/>
            <person name="Crosier M."/>
            <person name="Cummings A.T."/>
            <person name="Davies J."/>
            <person name="Dhami P."/>
            <person name="Dunn M."/>
            <person name="Dutta I."/>
            <person name="Dyer L.W."/>
            <person name="Earthrowl M.E."/>
            <person name="Faulkner L."/>
            <person name="Fleming C.J."/>
            <person name="Frankish A."/>
            <person name="Frankland J.A."/>
            <person name="French L."/>
            <person name="Fricker D.G."/>
            <person name="Garner P."/>
            <person name="Garnett J."/>
            <person name="Ghori J."/>
            <person name="Gilbert J.G.R."/>
            <person name="Glison C."/>
            <person name="Grafham D.V."/>
            <person name="Gribble S."/>
            <person name="Griffiths C."/>
            <person name="Griffiths-Jones S."/>
            <person name="Grocock R."/>
            <person name="Guy J."/>
            <person name="Hall R.E."/>
            <person name="Hammond S."/>
            <person name="Harley J.L."/>
            <person name="Harrison E.S.I."/>
            <person name="Hart E.A."/>
            <person name="Heath P.D."/>
            <person name="Henderson C.D."/>
            <person name="Hopkins B.L."/>
            <person name="Howard P.J."/>
            <person name="Howden P.J."/>
            <person name="Huckle E."/>
            <person name="Johnson C."/>
            <person name="Johnson D."/>
            <person name="Joy A.A."/>
            <person name="Kay M."/>
            <person name="Keenan S."/>
            <person name="Kershaw J.K."/>
            <person name="Kimberley A.M."/>
            <person name="King A."/>
            <person name="Knights A."/>
            <person name="Laird G.K."/>
            <person name="Langford C."/>
            <person name="Lawlor S."/>
            <person name="Leongamornlert D.A."/>
            <person name="Leversha M."/>
            <person name="Lloyd C."/>
            <person name="Lloyd D.M."/>
            <person name="Lovell J."/>
            <person name="Martin S."/>
            <person name="Mashreghi-Mohammadi M."/>
            <person name="Matthews L."/>
            <person name="McLaren S."/>
            <person name="McLay K.E."/>
            <person name="McMurray A."/>
            <person name="Milne S."/>
            <person name="Nickerson T."/>
            <person name="Nisbett J."/>
            <person name="Nordsiek G."/>
            <person name="Pearce A.V."/>
            <person name="Peck A.I."/>
            <person name="Porter K.M."/>
            <person name="Pandian R."/>
            <person name="Pelan S."/>
            <person name="Phillimore B."/>
            <person name="Povey S."/>
            <person name="Ramsey Y."/>
            <person name="Rand V."/>
            <person name="Scharfe M."/>
            <person name="Sehra H.K."/>
            <person name="Shownkeen R."/>
            <person name="Sims S.K."/>
            <person name="Skuce C.D."/>
            <person name="Smith M."/>
            <person name="Steward C.A."/>
            <person name="Swarbreck D."/>
            <person name="Sycamore N."/>
            <person name="Tester J."/>
            <person name="Thorpe A."/>
            <person name="Tracey A."/>
            <person name="Tromans A."/>
            <person name="Thomas D.W."/>
            <person name="Wall M."/>
            <person name="Wallis J.M."/>
            <person name="West A.P."/>
            <person name="Whitehead S.L."/>
            <person name="Willey D.L."/>
            <person name="Williams S.A."/>
            <person name="Wilming L."/>
            <person name="Wray P.W."/>
            <person name="Young L."/>
            <person name="Ashurst J.L."/>
            <person name="Coulson A."/>
            <person name="Blocker H."/>
            <person name="Durbin R.M."/>
            <person name="Sulston J.E."/>
            <person name="Hubbard T."/>
            <person name="Jackson M.J."/>
            <person name="Bentley D.R."/>
            <person name="Beck S."/>
            <person name="Rogers J."/>
            <person name="Dunham I."/>
        </authorList>
    </citation>
    <scope>NUCLEOTIDE SEQUENCE [LARGE SCALE GENOMIC DNA]</scope>
</reference>
<reference key="3">
    <citation type="journal article" date="2004" name="Genome Res.">
        <title>The status, quality, and expansion of the NIH full-length cDNA project: the Mammalian Gene Collection (MGC).</title>
        <authorList>
            <consortium name="The MGC Project Team"/>
        </authorList>
    </citation>
    <scope>NUCLEOTIDE SEQUENCE [LARGE SCALE MRNA] (ISOFORMS 2; 4 AND 7)</scope>
    <scope>VARIANT VAL-420</scope>
    <source>
        <tissue>Blood</tissue>
        <tissue>Brain</tissue>
    </source>
</reference>
<dbReference type="EMBL" id="AK091187">
    <property type="protein sequence ID" value="BAC03603.1"/>
    <property type="status" value="ALT_INIT"/>
    <property type="molecule type" value="mRNA"/>
</dbReference>
<dbReference type="EMBL" id="AK298581">
    <property type="protein sequence ID" value="BAG60772.1"/>
    <property type="status" value="ALT_INIT"/>
    <property type="molecule type" value="mRNA"/>
</dbReference>
<dbReference type="EMBL" id="AK298998">
    <property type="protein sequence ID" value="BAG61086.1"/>
    <property type="molecule type" value="mRNA"/>
</dbReference>
<dbReference type="EMBL" id="AK301427">
    <property type="protein sequence ID" value="BAG62955.1"/>
    <property type="molecule type" value="mRNA"/>
</dbReference>
<dbReference type="EMBL" id="AL591393">
    <property type="status" value="NOT_ANNOTATED_CDS"/>
    <property type="molecule type" value="Genomic_DNA"/>
</dbReference>
<dbReference type="EMBL" id="BC038592">
    <property type="protein sequence ID" value="AAH38592.1"/>
    <property type="molecule type" value="mRNA"/>
</dbReference>
<dbReference type="EMBL" id="BC042417">
    <property type="protein sequence ID" value="AAH42417.1"/>
    <property type="status" value="ALT_INIT"/>
    <property type="molecule type" value="mRNA"/>
</dbReference>
<dbReference type="EMBL" id="BC142985">
    <property type="protein sequence ID" value="AAI42986.1"/>
    <property type="status" value="ALT_INIT"/>
    <property type="molecule type" value="mRNA"/>
</dbReference>
<dbReference type="CCDS" id="CCDS55294.1">
    <molecule id="Q5VTQ0-5"/>
</dbReference>
<dbReference type="RefSeq" id="NP_001161811.1">
    <property type="nucleotide sequence ID" value="NM_001168339.1"/>
</dbReference>
<dbReference type="RefSeq" id="NP_001161812.1">
    <property type="nucleotide sequence ID" value="NM_001168340.1"/>
</dbReference>
<dbReference type="RefSeq" id="NP_001161813.1">
    <property type="nucleotide sequence ID" value="NM_001168341.1"/>
</dbReference>
<dbReference type="RefSeq" id="NP_001161814.1">
    <molecule id="Q5VTQ0-5"/>
    <property type="nucleotide sequence ID" value="NM_001168342.2"/>
</dbReference>
<dbReference type="RefSeq" id="NP_689787.2">
    <property type="nucleotide sequence ID" value="NM_152574.2"/>
</dbReference>
<dbReference type="RefSeq" id="XP_011516034.1">
    <molecule id="Q5VTQ0-2"/>
    <property type="nucleotide sequence ID" value="XM_011517732.3"/>
</dbReference>
<dbReference type="RefSeq" id="XP_016869800.1">
    <property type="nucleotide sequence ID" value="XM_017014311.1"/>
</dbReference>
<dbReference type="RefSeq" id="XP_016869801.1">
    <molecule id="Q5VTQ0-2"/>
    <property type="nucleotide sequence ID" value="XM_017014312.2"/>
</dbReference>
<dbReference type="RefSeq" id="XP_024303190.1">
    <molecule id="Q5VTQ0-2"/>
    <property type="nucleotide sequence ID" value="XM_024447422.2"/>
</dbReference>
<dbReference type="RefSeq" id="XP_024303191.1">
    <molecule id="Q5VTQ0-2"/>
    <property type="nucleotide sequence ID" value="XM_024447423.2"/>
</dbReference>
<dbReference type="RefSeq" id="XP_024303192.1">
    <molecule id="Q5VTQ0-2"/>
    <property type="nucleotide sequence ID" value="XM_024447424.2"/>
</dbReference>
<dbReference type="RefSeq" id="XP_024303193.1">
    <molecule id="Q5VTQ0-5"/>
    <property type="nucleotide sequence ID" value="XM_024447425.2"/>
</dbReference>
<dbReference type="RefSeq" id="XP_047278785.1">
    <molecule id="Q5VTQ0-2"/>
    <property type="nucleotide sequence ID" value="XM_047422829.1"/>
</dbReference>
<dbReference type="SMR" id="Q5VTQ0"/>
<dbReference type="BioGRID" id="127655">
    <property type="interactions" value="19"/>
</dbReference>
<dbReference type="DIP" id="DIP-62094N"/>
<dbReference type="FunCoup" id="Q5VTQ0">
    <property type="interactions" value="164"/>
</dbReference>
<dbReference type="IntAct" id="Q5VTQ0">
    <property type="interactions" value="8"/>
</dbReference>
<dbReference type="STRING" id="9606.ENSP00000422496"/>
<dbReference type="iPTMnet" id="Q5VTQ0"/>
<dbReference type="PhosphoSitePlus" id="Q5VTQ0"/>
<dbReference type="BioMuta" id="TTC39B"/>
<dbReference type="DMDM" id="384872705"/>
<dbReference type="jPOST" id="Q5VTQ0"/>
<dbReference type="MassIVE" id="Q5VTQ0"/>
<dbReference type="PaxDb" id="9606-ENSP00000422496"/>
<dbReference type="PeptideAtlas" id="Q5VTQ0"/>
<dbReference type="ProteomicsDB" id="65339">
    <molecule id="Q5VTQ0-1"/>
</dbReference>
<dbReference type="ProteomicsDB" id="65340">
    <molecule id="Q5VTQ0-2"/>
</dbReference>
<dbReference type="ProteomicsDB" id="65341">
    <molecule id="Q5VTQ0-3"/>
</dbReference>
<dbReference type="ProteomicsDB" id="65342">
    <molecule id="Q5VTQ0-4"/>
</dbReference>
<dbReference type="ProteomicsDB" id="65343">
    <molecule id="Q5VTQ0-5"/>
</dbReference>
<dbReference type="ProteomicsDB" id="65344">
    <molecule id="Q5VTQ0-6"/>
</dbReference>
<dbReference type="ProteomicsDB" id="65345">
    <molecule id="Q5VTQ0-7"/>
</dbReference>
<dbReference type="Pumba" id="Q5VTQ0"/>
<dbReference type="Antibodypedia" id="24508">
    <property type="antibodies" value="99 antibodies from 22 providers"/>
</dbReference>
<dbReference type="DNASU" id="158219"/>
<dbReference type="Ensembl" id="ENST00000507285.5">
    <molecule id="Q5VTQ0-5"/>
    <property type="protein sequence ID" value="ENSP00000426539.1"/>
    <property type="gene ID" value="ENSG00000155158.20"/>
</dbReference>
<dbReference type="Ensembl" id="ENST00000507993.5">
    <molecule id="Q5VTQ0-5"/>
    <property type="protein sequence ID" value="ENSP00000423392.1"/>
    <property type="gene ID" value="ENSG00000155158.20"/>
</dbReference>
<dbReference type="GeneID" id="158219"/>
<dbReference type="KEGG" id="hsa:158219"/>
<dbReference type="UCSC" id="uc003zlr.3">
    <molecule id="Q5VTQ0-1"/>
    <property type="organism name" value="human"/>
</dbReference>
<dbReference type="AGR" id="HGNC:23704"/>
<dbReference type="CTD" id="158219"/>
<dbReference type="DisGeNET" id="158219"/>
<dbReference type="GeneCards" id="TTC39B"/>
<dbReference type="HGNC" id="HGNC:23704">
    <property type="gene designation" value="TTC39B"/>
</dbReference>
<dbReference type="HPA" id="ENSG00000155158">
    <property type="expression patterns" value="Low tissue specificity"/>
</dbReference>
<dbReference type="MIM" id="613574">
    <property type="type" value="gene"/>
</dbReference>
<dbReference type="neXtProt" id="NX_Q5VTQ0"/>
<dbReference type="OpenTargets" id="ENSG00000155158"/>
<dbReference type="PharmGKB" id="PA162407261"/>
<dbReference type="VEuPathDB" id="HostDB:ENSG00000155158"/>
<dbReference type="eggNOG" id="KOG3783">
    <property type="taxonomic scope" value="Eukaryota"/>
</dbReference>
<dbReference type="GeneTree" id="ENSGT00950000182917"/>
<dbReference type="HOGENOM" id="CLU_010086_3_0_1"/>
<dbReference type="InParanoid" id="Q5VTQ0"/>
<dbReference type="OMA" id="ELMWAHC"/>
<dbReference type="OrthoDB" id="43460at2759"/>
<dbReference type="PAN-GO" id="Q5VTQ0">
    <property type="GO annotations" value="4 GO annotations based on evolutionary models"/>
</dbReference>
<dbReference type="PhylomeDB" id="Q5VTQ0"/>
<dbReference type="TreeFam" id="TF313761"/>
<dbReference type="PathwayCommons" id="Q5VTQ0"/>
<dbReference type="SignaLink" id="Q5VTQ0"/>
<dbReference type="BioGRID-ORCS" id="158219">
    <property type="hits" value="8 hits in 1151 CRISPR screens"/>
</dbReference>
<dbReference type="ChiTaRS" id="TTC39B">
    <property type="organism name" value="human"/>
</dbReference>
<dbReference type="GenomeRNAi" id="158219"/>
<dbReference type="Pharos" id="Q5VTQ0">
    <property type="development level" value="Tbio"/>
</dbReference>
<dbReference type="PRO" id="PR:Q5VTQ0"/>
<dbReference type="Proteomes" id="UP000005640">
    <property type="component" value="Chromosome 9"/>
</dbReference>
<dbReference type="RNAct" id="Q5VTQ0">
    <property type="molecule type" value="protein"/>
</dbReference>
<dbReference type="Bgee" id="ENSG00000155158">
    <property type="expression patterns" value="Expressed in epithelial cell of pancreas and 169 other cell types or tissues"/>
</dbReference>
<dbReference type="ExpressionAtlas" id="Q5VTQ0">
    <property type="expression patterns" value="baseline and differential"/>
</dbReference>
<dbReference type="GO" id="GO:0042632">
    <property type="term" value="P:cholesterol homeostasis"/>
    <property type="evidence" value="ECO:0000250"/>
    <property type="project" value="UniProtKB"/>
</dbReference>
<dbReference type="GO" id="GO:0006629">
    <property type="term" value="P:lipid metabolic process"/>
    <property type="evidence" value="ECO:0007669"/>
    <property type="project" value="UniProtKB-KW"/>
</dbReference>
<dbReference type="GO" id="GO:0010887">
    <property type="term" value="P:negative regulation of cholesterol storage"/>
    <property type="evidence" value="ECO:0000250"/>
    <property type="project" value="UniProtKB"/>
</dbReference>
<dbReference type="GO" id="GO:0010874">
    <property type="term" value="P:regulation of cholesterol efflux"/>
    <property type="evidence" value="ECO:0000250"/>
    <property type="project" value="UniProtKB"/>
</dbReference>
<dbReference type="GO" id="GO:0090181">
    <property type="term" value="P:regulation of cholesterol metabolic process"/>
    <property type="evidence" value="ECO:0000250"/>
    <property type="project" value="UniProtKB"/>
</dbReference>
<dbReference type="FunFam" id="1.25.40.10:FF:000273">
    <property type="entry name" value="Tetratricopeptide repeat domain 39B"/>
    <property type="match status" value="1"/>
</dbReference>
<dbReference type="Gene3D" id="1.25.40.10">
    <property type="entry name" value="Tetratricopeptide repeat domain"/>
    <property type="match status" value="1"/>
</dbReference>
<dbReference type="InterPro" id="IPR019412">
    <property type="entry name" value="Iml2/TPR_39"/>
</dbReference>
<dbReference type="InterPro" id="IPR011990">
    <property type="entry name" value="TPR-like_helical_dom_sf"/>
</dbReference>
<dbReference type="InterPro" id="IPR019734">
    <property type="entry name" value="TPR_rpt"/>
</dbReference>
<dbReference type="PANTHER" id="PTHR31859">
    <property type="entry name" value="TETRATRICOPEPTIDE REPEAT PROTEIN 39 FAMILY MEMBER"/>
    <property type="match status" value="1"/>
</dbReference>
<dbReference type="PANTHER" id="PTHR31859:SF4">
    <property type="entry name" value="TETRATRICOPEPTIDE REPEAT PROTEIN 39B"/>
    <property type="match status" value="1"/>
</dbReference>
<dbReference type="Pfam" id="PF10300">
    <property type="entry name" value="Iml2-TPR_39"/>
    <property type="match status" value="1"/>
</dbReference>
<dbReference type="Pfam" id="PF13181">
    <property type="entry name" value="TPR_8"/>
    <property type="match status" value="1"/>
</dbReference>
<dbReference type="SMART" id="SM00028">
    <property type="entry name" value="TPR"/>
    <property type="match status" value="3"/>
</dbReference>
<dbReference type="SUPFAM" id="SSF81901">
    <property type="entry name" value="HCP-like"/>
    <property type="match status" value="1"/>
</dbReference>
<feature type="chain" id="PRO_0000292000" description="Tetratricopeptide repeat protein 39B">
    <location>
        <begin position="1"/>
        <end position="682"/>
    </location>
</feature>
<feature type="repeat" description="TPR 1">
    <location>
        <begin position="393"/>
        <end position="426"/>
    </location>
</feature>
<feature type="repeat" description="TPR 2">
    <location>
        <begin position="626"/>
        <end position="659"/>
    </location>
</feature>
<feature type="splice variant" id="VSP_042798" description="In isoform 7." evidence="5">
    <location>
        <begin position="1"/>
        <end position="483"/>
    </location>
</feature>
<feature type="splice variant" id="VSP_042799" description="In isoform 5." evidence="4">
    <location>
        <begin position="1"/>
        <end position="165"/>
    </location>
</feature>
<feature type="splice variant" id="VSP_026355" description="In isoform 2." evidence="5">
    <location>
        <begin position="1"/>
        <end position="97"/>
    </location>
</feature>
<feature type="splice variant" id="VSP_042800" description="In isoform 6." evidence="4">
    <original>ISSHSDMATSSLHFASCDTQQAPRQRGASTVSSSSSTKVDLKSGLEECAVALNLFLSNKFTDALELLRPW</original>
    <variation>M</variation>
    <location>
        <begin position="92"/>
        <end position="161"/>
    </location>
</feature>
<feature type="splice variant" id="VSP_042801" description="In isoform 4." evidence="5">
    <location>
        <begin position="206"/>
        <end position="207"/>
    </location>
</feature>
<feature type="splice variant" id="VSP_042802" description="In isoform 3." evidence="4">
    <original>GSLVLFYHARIELLKGNLEE</original>
    <variation>VRSVFQS</variation>
    <location>
        <begin position="392"/>
        <end position="411"/>
    </location>
</feature>
<feature type="splice variant" id="VSP_042803" description="In isoform 7." evidence="5">
    <original>VVATNENVVTLF</original>
    <variation>MTFLWGWAGVLH</variation>
    <location>
        <begin position="484"/>
        <end position="495"/>
    </location>
</feature>
<feature type="sequence variant" id="VAR_054078" description="In dbSNP:rs10961917.">
    <original>T</original>
    <variation>P</variation>
    <location>
        <position position="128"/>
    </location>
</feature>
<feature type="sequence variant" id="VAR_032926" description="In dbSNP:rs1407977." evidence="2 3">
    <original>I</original>
    <variation>V</variation>
    <location>
        <position position="420"/>
    </location>
</feature>
<feature type="sequence conflict" description="In Ref. 1; BAG61086." evidence="6" ref="1">
    <original>C</original>
    <variation>Y</variation>
    <location>
        <position position="7"/>
    </location>
</feature>
<feature type="sequence conflict" description="In Ref. 1; BAG61086." evidence="6" ref="1">
    <original>S</original>
    <variation>F</variation>
    <location>
        <position position="329"/>
    </location>
</feature>
<feature type="sequence conflict" description="In Ref. 1; BAG60772." evidence="6" ref="1">
    <original>R</original>
    <variation>S</variation>
    <location>
        <position position="496"/>
    </location>
</feature>
<feature type="sequence conflict" description="In Ref. 1; BAG60772." evidence="6" ref="1">
    <original>S</original>
    <variation>G</variation>
    <location>
        <position position="500"/>
    </location>
</feature>
<feature type="sequence conflict" description="In Ref. 3; AAI42986." evidence="6" ref="3">
    <original>F</original>
    <variation>L</variation>
    <location>
        <position position="667"/>
    </location>
</feature>
<sequence length="682" mass="76956">MDAVLACRLRGRGNRVAALRPRPRPGGSAGPSPFALLCAGLSPEPRAGVGSEFPAWFLGGSSQRRNMALLGSRAELEADEDVFEDALETISISSHSDMATSSLHFASCDTQQAPRQRGASTVSSSSSTKVDLKSGLEECAVALNLFLSNKFTDALELLRPWAKESMYHALGYSTIVVLQAVLTFEQQDIQNGISAMKDALQTCQKYRKKYTVVESFSSLLSRGSLEQLSEEEMHAEICYAECLLQKAALTFVQDENMINFIKGGLKIRTSYQIYKECLSILHEIQKNKLQQEFFYEFEGGVKLGSGAFNLMLSLLPARIIRLLEFIGFSGNRELGLLQLREGASGRSMRSALCCLTILAFHTYISLILGTGEVNVAEAERLLAPFLQQFPNGSLVLFYHARIELLKGNLEEAQEVFQKCISVQEEWKQFHHLCYWELMWINVFQQNWMQAYYYSDLLCKESKWSKATYVFLKAAILSMLPEEDVVATNENVVTLFRQVDSLKQRIAGKSIPTEKFAVRKARRYSASLPAPVKLILPALEMMYVWNGFSIVSKRKDLSENLLVTVEKAEAALQSQNFNSFSVDDECLVKLLKGCCLKNLQRPLQAELCYNHVVESEKLLKYDHYLVPFTLFELASLYKSQGEIDKAIKFLETARNNYKDYSLESRLHFRIQAALHLWRKPSSD</sequence>
<organism>
    <name type="scientific">Homo sapiens</name>
    <name type="common">Human</name>
    <dbReference type="NCBI Taxonomy" id="9606"/>
    <lineage>
        <taxon>Eukaryota</taxon>
        <taxon>Metazoa</taxon>
        <taxon>Chordata</taxon>
        <taxon>Craniata</taxon>
        <taxon>Vertebrata</taxon>
        <taxon>Euteleostomi</taxon>
        <taxon>Mammalia</taxon>
        <taxon>Eutheria</taxon>
        <taxon>Euarchontoglires</taxon>
        <taxon>Primates</taxon>
        <taxon>Haplorrhini</taxon>
        <taxon>Catarrhini</taxon>
        <taxon>Hominidae</taxon>
        <taxon>Homo</taxon>
    </lineage>
</organism>
<comment type="function">
    <text evidence="1">Regulates high density lipoprotein (HDL) cholesterol metabolism by promoting the ubiquitination and degradation of the oxysterols receptors LXR (NR1H2 and NR1H3).</text>
</comment>
<comment type="interaction">
    <interactant intactId="EBI-4289975">
        <id>Q5VTQ0</id>
    </interactant>
    <interactant intactId="EBI-1188298">
        <id>O95292</id>
        <label>VAPB</label>
    </interactant>
    <organismsDiffer>false</organismsDiffer>
    <experiments>6</experiments>
</comment>
<comment type="interaction">
    <interactant intactId="EBI-10247626">
        <id>Q5VTQ0-4</id>
    </interactant>
    <interactant intactId="EBI-748397">
        <id>P50222</id>
        <label>MEOX2</label>
    </interactant>
    <organismsDiffer>false</organismsDiffer>
    <experiments>3</experiments>
</comment>
<comment type="alternative products">
    <event type="alternative splicing"/>
    <isoform>
        <id>Q5VTQ0-1</id>
        <name>1</name>
        <sequence type="displayed"/>
    </isoform>
    <isoform>
        <id>Q5VTQ0-2</id>
        <name>2</name>
        <sequence type="described" ref="VSP_026355"/>
    </isoform>
    <isoform>
        <id>Q5VTQ0-3</id>
        <name>3</name>
        <sequence type="described" ref="VSP_042802"/>
    </isoform>
    <isoform>
        <id>Q5VTQ0-4</id>
        <name>4</name>
        <sequence type="described" ref="VSP_042801"/>
    </isoform>
    <isoform>
        <id>Q5VTQ0-5</id>
        <name>5</name>
        <sequence type="described" ref="VSP_042799"/>
    </isoform>
    <isoform>
        <id>Q5VTQ0-6</id>
        <name>6</name>
        <sequence type="described" ref="VSP_042800"/>
    </isoform>
    <isoform>
        <id>Q5VTQ0-7</id>
        <name>7</name>
        <sequence type="described" ref="VSP_042798 VSP_042803"/>
    </isoform>
</comment>
<comment type="similarity">
    <text evidence="6">Belongs to the TTC39 family.</text>
</comment>
<comment type="sequence caution" evidence="6">
    <conflict type="erroneous initiation">
        <sequence resource="EMBL-CDS" id="AAH42417"/>
    </conflict>
    <text>Extended N-terminus.</text>
</comment>
<comment type="sequence caution" evidence="6">
    <conflict type="erroneous initiation">
        <sequence resource="EMBL-CDS" id="AAI42986"/>
    </conflict>
    <text>Truncated N-terminus.</text>
</comment>
<comment type="sequence caution" evidence="6">
    <conflict type="erroneous initiation">
        <sequence resource="EMBL-CDS" id="BAC03603"/>
    </conflict>
    <text>Truncated N-terminus.</text>
</comment>
<comment type="sequence caution" evidence="6">
    <conflict type="erroneous initiation">
        <sequence resource="EMBL-CDS" id="BAG60772"/>
    </conflict>
    <text>Truncated N-terminus.</text>
</comment>